<name>BPHC_PARXL</name>
<accession>P47228</accession>
<accession>Q13FT6</accession>
<reference key="1">
    <citation type="journal article" date="1993" name="Gene">
        <title>Genetic analysis of a Pseudomonas locus encoding a pathway for biphenyl/polychlorinated biphenyl degradation.</title>
        <authorList>
            <person name="Hofer B."/>
            <person name="Eltis L.D."/>
            <person name="Dowling D.N."/>
            <person name="Timmis K.N."/>
        </authorList>
    </citation>
    <scope>NUCLEOTIDE SEQUENCE [GENOMIC DNA]</scope>
</reference>
<reference key="2">
    <citation type="journal article" date="2006" name="Proc. Natl. Acad. Sci. U.S.A.">
        <title>Burkholderia xenovorans LB400 harbors a multi-replicon, 9.73-Mbp genome shaped for versatility.</title>
        <authorList>
            <person name="Chain P.S.G."/>
            <person name="Denef V.J."/>
            <person name="Konstantinidis K.T."/>
            <person name="Vergez L.M."/>
            <person name="Agullo L."/>
            <person name="Reyes V.L."/>
            <person name="Hauser L."/>
            <person name="Cordova M."/>
            <person name="Gomez L."/>
            <person name="Gonzalez M."/>
            <person name="Land M."/>
            <person name="Lao V."/>
            <person name="Larimer F."/>
            <person name="LiPuma J.J."/>
            <person name="Mahenthiralingam E."/>
            <person name="Malfatti S.A."/>
            <person name="Marx C.J."/>
            <person name="Parnell J.J."/>
            <person name="Ramette A."/>
            <person name="Richardson P."/>
            <person name="Seeger M."/>
            <person name="Smith D."/>
            <person name="Spilker T."/>
            <person name="Sul W.J."/>
            <person name="Tsoi T.V."/>
            <person name="Ulrich L.E."/>
            <person name="Zhulin I.B."/>
            <person name="Tiedje J.M."/>
        </authorList>
    </citation>
    <scope>NUCLEOTIDE SEQUENCE [LARGE SCALE GENOMIC DNA]</scope>
    <source>
        <strain>LB400</strain>
    </source>
</reference>
<reference key="3">
    <citation type="journal article" date="1993" name="J. Biol. Chem.">
        <title>Purification and crystallization of 2,3-dihydroxybiphenyl 1,2-dioxygenase.</title>
        <authorList>
            <person name="Eltis L.D."/>
            <person name="Hofmann B."/>
            <person name="Hecht H.J."/>
            <person name="Luensdorf H."/>
            <person name="Timmis K.N."/>
        </authorList>
    </citation>
    <scope>PROTEIN SEQUENCE OF 2-32</scope>
    <scope>SUBSTRATE CHARACTERIZATION</scope>
    <scope>PRELIMINARY CRYSTALLIZATION</scope>
    <scope>SUBUNIT</scope>
</reference>
<reference key="4">
    <citation type="journal article" date="1995" name="Science">
        <title>Crystal structure of the biphenyl-cleaving extradiol dioxygenase from a PCB-degrading pseudomonad.</title>
        <authorList>
            <person name="Han S."/>
            <person name="Eltis L.D."/>
            <person name="Timmis K.N."/>
            <person name="Muchmore S.W."/>
            <person name="Bolin J.T."/>
        </authorList>
    </citation>
    <scope>X-RAY CRYSTALLOGRAPHY (1.9 ANGSTROMS)</scope>
</reference>
<reference key="5">
    <citation type="journal article" date="1998" name="J. Biol. Chem.">
        <title>Molecular basis for the stabilization and inhibition of 2,3-dihydroxybiphenyl 1,2-dioxygenase by t-butanol.</title>
        <authorList>
            <person name="Vaillancourt F.H."/>
            <person name="Han S."/>
            <person name="Fortin P.D."/>
            <person name="Bolin J.T."/>
            <person name="Eltis L.D."/>
        </authorList>
    </citation>
    <scope>X-RAY CRYSTALLOGRAPHY (1.9 ANGSTROMS)</scope>
</reference>
<comment type="function">
    <text>Shows a preference for catechols with groups immediately adjacent to the hydroxyl substituents.</text>
</comment>
<comment type="catalytic activity">
    <reaction>
        <text>biphenyl-2,3-diol + O2 = 2-hydroxy-6-oxo-6-phenylhexa-2,4-dienoate + H(+)</text>
        <dbReference type="Rhea" id="RHEA:14413"/>
        <dbReference type="ChEBI" id="CHEBI:15378"/>
        <dbReference type="ChEBI" id="CHEBI:15379"/>
        <dbReference type="ChEBI" id="CHEBI:16205"/>
        <dbReference type="ChEBI" id="CHEBI:58284"/>
        <dbReference type="EC" id="1.13.11.39"/>
    </reaction>
</comment>
<comment type="cofactor">
    <cofactor>
        <name>Fe(2+)</name>
        <dbReference type="ChEBI" id="CHEBI:29033"/>
    </cofactor>
    <text>Binds 1 Fe(2+) ion per subunit.</text>
</comment>
<comment type="biophysicochemical properties">
    <kinetics>
        <KM>7 uM for biphenyl-2,3-diol</KM>
        <text>Substrate inhibition occurs at 300 uM (+/- 20 uM).</text>
    </kinetics>
    <phDependence>
        <text>Optimum pH is 8.0.</text>
    </phDependence>
</comment>
<comment type="pathway">
    <text>Xenobiotic degradation; biphenyl degradation; 2-hydroxy-2,4-pentadienoate and benzoate from biphenyl: step 3/4.</text>
</comment>
<comment type="subunit">
    <text evidence="2">Homooctamer. The enzyme is composed of two planar tetramers rotated at 45 degrees relative to each other, with a channel in the middle.</text>
</comment>
<comment type="similarity">
    <text evidence="3">Belongs to the extradiol ring-cleavage dioxygenase family.</text>
</comment>
<feature type="initiator methionine" description="Removed" evidence="2">
    <location>
        <position position="1"/>
    </location>
</feature>
<feature type="chain" id="PRO_0000085033" description="Biphenyl-2,3-diol 1,2-dioxygenase">
    <location>
        <begin position="2"/>
        <end position="298"/>
    </location>
</feature>
<feature type="domain" description="VOC 1" evidence="1">
    <location>
        <begin position="5"/>
        <end position="119"/>
    </location>
</feature>
<feature type="domain" description="VOC 2" evidence="1">
    <location>
        <begin position="143"/>
        <end position="264"/>
    </location>
</feature>
<feature type="binding site">
    <location>
        <position position="146"/>
    </location>
    <ligand>
        <name>Fe cation</name>
        <dbReference type="ChEBI" id="CHEBI:24875"/>
    </ligand>
</feature>
<feature type="binding site">
    <location>
        <position position="210"/>
    </location>
    <ligand>
        <name>Fe cation</name>
        <dbReference type="ChEBI" id="CHEBI:24875"/>
    </ligand>
</feature>
<feature type="binding site">
    <location>
        <position position="260"/>
    </location>
    <ligand>
        <name>Fe cation</name>
        <dbReference type="ChEBI" id="CHEBI:24875"/>
    </ligand>
</feature>
<feature type="strand" evidence="4">
    <location>
        <begin position="3"/>
        <end position="14"/>
    </location>
</feature>
<feature type="helix" evidence="4">
    <location>
        <begin position="16"/>
        <end position="25"/>
    </location>
</feature>
<feature type="strand" evidence="4">
    <location>
        <begin position="30"/>
        <end position="35"/>
    </location>
</feature>
<feature type="strand" evidence="4">
    <location>
        <begin position="38"/>
        <end position="47"/>
    </location>
</feature>
<feature type="strand" evidence="4">
    <location>
        <begin position="49"/>
        <end position="54"/>
    </location>
</feature>
<feature type="strand" evidence="4">
    <location>
        <begin position="59"/>
        <end position="69"/>
    </location>
</feature>
<feature type="helix" evidence="4">
    <location>
        <begin position="70"/>
        <end position="82"/>
    </location>
</feature>
<feature type="helix" evidence="4">
    <location>
        <begin position="92"/>
        <end position="98"/>
    </location>
</feature>
<feature type="strand" evidence="4">
    <location>
        <begin position="101"/>
        <end position="107"/>
    </location>
</feature>
<feature type="strand" evidence="4">
    <location>
        <begin position="113"/>
        <end position="118"/>
    </location>
</feature>
<feature type="strand" evidence="4">
    <location>
        <begin position="131"/>
        <end position="133"/>
    </location>
</feature>
<feature type="helix" evidence="4">
    <location>
        <begin position="140"/>
        <end position="142"/>
    </location>
</feature>
<feature type="strand" evidence="4">
    <location>
        <begin position="146"/>
        <end position="150"/>
    </location>
</feature>
<feature type="helix" evidence="4">
    <location>
        <begin position="154"/>
        <end position="163"/>
    </location>
</feature>
<feature type="strand" evidence="4">
    <location>
        <begin position="168"/>
        <end position="178"/>
    </location>
</feature>
<feature type="strand" evidence="4">
    <location>
        <begin position="181"/>
        <end position="194"/>
    </location>
</feature>
<feature type="strand" evidence="4">
    <location>
        <begin position="196"/>
        <end position="200"/>
    </location>
</feature>
<feature type="strand" evidence="4">
    <location>
        <begin position="205"/>
        <end position="216"/>
    </location>
</feature>
<feature type="helix" evidence="4">
    <location>
        <begin position="218"/>
        <end position="229"/>
    </location>
</feature>
<feature type="turn" evidence="4">
    <location>
        <begin position="230"/>
        <end position="232"/>
    </location>
</feature>
<feature type="strand" evidence="4">
    <location>
        <begin position="234"/>
        <end position="244"/>
    </location>
</feature>
<feature type="strand" evidence="4">
    <location>
        <begin position="247"/>
        <end position="252"/>
    </location>
</feature>
<feature type="strand" evidence="4">
    <location>
        <begin position="258"/>
        <end position="263"/>
    </location>
</feature>
<feature type="strand" evidence="4">
    <location>
        <begin position="275"/>
        <end position="278"/>
    </location>
</feature>
<feature type="strand" evidence="4">
    <location>
        <begin position="280"/>
        <end position="284"/>
    </location>
</feature>
<evidence type="ECO:0000255" key="1">
    <source>
        <dbReference type="PROSITE-ProRule" id="PRU01163"/>
    </source>
</evidence>
<evidence type="ECO:0000269" key="2">
    <source>
    </source>
</evidence>
<evidence type="ECO:0000305" key="3"/>
<evidence type="ECO:0007829" key="4">
    <source>
        <dbReference type="PDB" id="1LGT"/>
    </source>
</evidence>
<gene>
    <name type="primary">bphC</name>
    <name type="ordered locus">Bxeno_C1125</name>
    <name type="ORF">Bxe_C1191</name>
</gene>
<proteinExistence type="evidence at protein level"/>
<sequence length="298" mass="32471">MSIRSLGYMGFAVSDVAAWRSFLTQKLGLMEAGTTDNGDLFRIDSRAWRIAVQQGEVDDLAFAGYEVADAAGLAQMADKLKQAGIAVTTGDASLARRRGVTGLITFADPFGLPLEIYYGASEVFEKPFLPGAAVSGFLTGEQGLGHFVRCVPDSDKALAFYTDVLGFQLSDVIDMKMGPDVTVPAYFLHCNERHHTLAIAAFPLPKRIHHFMLEVASLDDVGFAFDRVDADGLITSTLGRHTNDHMVSFYASTPSGVEVEYGWSARTVDRSWVVVRHDSPSMWGHKSVRDKAAARNKA</sequence>
<protein>
    <recommendedName>
        <fullName>Biphenyl-2,3-diol 1,2-dioxygenase</fullName>
        <ecNumber>1.13.11.39</ecNumber>
    </recommendedName>
    <alternativeName>
        <fullName>2,3-dihydroxybiphenyl dioxygenase</fullName>
        <shortName>DHBD</shortName>
    </alternativeName>
    <alternativeName>
        <fullName>23OHBP oxygenase</fullName>
    </alternativeName>
</protein>
<keyword id="KW-0002">3D-structure</keyword>
<keyword id="KW-0058">Aromatic hydrocarbons catabolism</keyword>
<keyword id="KW-0223">Dioxygenase</keyword>
<keyword id="KW-0903">Direct protein sequencing</keyword>
<keyword id="KW-0408">Iron</keyword>
<keyword id="KW-0479">Metal-binding</keyword>
<keyword id="KW-0560">Oxidoreductase</keyword>
<keyword id="KW-1185">Reference proteome</keyword>
<keyword id="KW-0677">Repeat</keyword>
<organism>
    <name type="scientific">Paraburkholderia xenovorans (strain LB400)</name>
    <dbReference type="NCBI Taxonomy" id="266265"/>
    <lineage>
        <taxon>Bacteria</taxon>
        <taxon>Pseudomonadati</taxon>
        <taxon>Pseudomonadota</taxon>
        <taxon>Betaproteobacteria</taxon>
        <taxon>Burkholderiales</taxon>
        <taxon>Burkholderiaceae</taxon>
        <taxon>Paraburkholderia</taxon>
    </lineage>
</organism>
<dbReference type="EC" id="1.13.11.39"/>
<dbReference type="EMBL" id="X66122">
    <property type="protein sequence ID" value="CAA46910.1"/>
    <property type="molecule type" value="Genomic_DNA"/>
</dbReference>
<dbReference type="EMBL" id="CP000272">
    <property type="protein sequence ID" value="ABE37053.1"/>
    <property type="molecule type" value="Genomic_DNA"/>
</dbReference>
<dbReference type="PIR" id="JN0815">
    <property type="entry name" value="JN0815"/>
</dbReference>
<dbReference type="PDB" id="1HAN">
    <property type="method" value="X-ray"/>
    <property type="resolution" value="1.90 A"/>
    <property type="chains" value="A=2-298"/>
</dbReference>
<dbReference type="PDB" id="1KMY">
    <property type="method" value="X-ray"/>
    <property type="resolution" value="2.00 A"/>
    <property type="chains" value="A=2-298"/>
</dbReference>
<dbReference type="PDB" id="1KND">
    <property type="method" value="X-ray"/>
    <property type="resolution" value="1.90 A"/>
    <property type="chains" value="A=2-298"/>
</dbReference>
<dbReference type="PDB" id="1KNF">
    <property type="method" value="X-ray"/>
    <property type="resolution" value="1.90 A"/>
    <property type="chains" value="A=2-298"/>
</dbReference>
<dbReference type="PDB" id="1LGT">
    <property type="method" value="X-ray"/>
    <property type="resolution" value="1.70 A"/>
    <property type="chains" value="A=2-298"/>
</dbReference>
<dbReference type="PDB" id="1LKD">
    <property type="method" value="X-ray"/>
    <property type="resolution" value="1.70 A"/>
    <property type="chains" value="A=2-298"/>
</dbReference>
<dbReference type="PDBsum" id="1HAN"/>
<dbReference type="PDBsum" id="1KMY"/>
<dbReference type="PDBsum" id="1KND"/>
<dbReference type="PDBsum" id="1KNF"/>
<dbReference type="PDBsum" id="1LGT"/>
<dbReference type="PDBsum" id="1LKD"/>
<dbReference type="SMR" id="P47228"/>
<dbReference type="STRING" id="266265.Bxe_C1191"/>
<dbReference type="DrugBank" id="DB02232">
    <property type="generic name" value="1,2-Dihydroxybenzene"/>
</dbReference>
<dbReference type="DrugBank" id="DB03259">
    <property type="generic name" value="2',6'-Dichloro-Biphenyl-2,6-Diol"/>
</dbReference>
<dbReference type="DrugBank" id="DB01925">
    <property type="generic name" value="2'-Chloro-Biphenyl-2,3-Diol"/>
</dbReference>
<dbReference type="DrugBank" id="DB03454">
    <property type="generic name" value="3-methyl-benzene-1,2-diol"/>
</dbReference>
<dbReference type="DrugBank" id="DB02923">
    <property type="generic name" value="Biphenyl-2,3-Diol"/>
</dbReference>
<dbReference type="DrugBank" id="DB03900">
    <property type="generic name" value="tert-butanol"/>
</dbReference>
<dbReference type="KEGG" id="bxb:DR64_8614"/>
<dbReference type="KEGG" id="bxe:Bxe_C1191"/>
<dbReference type="eggNOG" id="COG0346">
    <property type="taxonomic scope" value="Bacteria"/>
</dbReference>
<dbReference type="OrthoDB" id="9803142at2"/>
<dbReference type="SABIO-RK" id="P47228"/>
<dbReference type="UniPathway" id="UPA00155">
    <property type="reaction ID" value="UER00252"/>
</dbReference>
<dbReference type="EvolutionaryTrace" id="P47228"/>
<dbReference type="Proteomes" id="UP000001817">
    <property type="component" value="Chromosome 3"/>
</dbReference>
<dbReference type="GO" id="GO:0018583">
    <property type="term" value="F:biphenyl-2,3-diol 1,2-dioxygenase activity"/>
    <property type="evidence" value="ECO:0007669"/>
    <property type="project" value="UniProtKB-EC"/>
</dbReference>
<dbReference type="GO" id="GO:0008198">
    <property type="term" value="F:ferrous iron binding"/>
    <property type="evidence" value="ECO:0007669"/>
    <property type="project" value="InterPro"/>
</dbReference>
<dbReference type="GO" id="GO:0042178">
    <property type="term" value="P:xenobiotic catabolic process"/>
    <property type="evidence" value="ECO:0007669"/>
    <property type="project" value="InterPro"/>
</dbReference>
<dbReference type="CDD" id="cd07237">
    <property type="entry name" value="BphC1-RGP6_C_like"/>
    <property type="match status" value="1"/>
</dbReference>
<dbReference type="CDD" id="cd07252">
    <property type="entry name" value="BphC1-RGP6_N_like"/>
    <property type="match status" value="1"/>
</dbReference>
<dbReference type="Gene3D" id="3.10.180.10">
    <property type="entry name" value="2,3-Dihydroxybiphenyl 1,2-Dioxygenase, domain 1"/>
    <property type="match status" value="2"/>
</dbReference>
<dbReference type="InterPro" id="IPR017626">
    <property type="entry name" value="DiOHbiphenyl_dOase"/>
</dbReference>
<dbReference type="InterPro" id="IPR029068">
    <property type="entry name" value="Glyas_Bleomycin-R_OHBP_Dase"/>
</dbReference>
<dbReference type="InterPro" id="IPR004360">
    <property type="entry name" value="Glyas_Fos-R_dOase_dom"/>
</dbReference>
<dbReference type="InterPro" id="IPR037523">
    <property type="entry name" value="VOC"/>
</dbReference>
<dbReference type="InterPro" id="IPR000486">
    <property type="entry name" value="Xdiol_ring_cleave_dOase_1/2"/>
</dbReference>
<dbReference type="NCBIfam" id="TIGR03213">
    <property type="entry name" value="23dbph12diox"/>
    <property type="match status" value="1"/>
</dbReference>
<dbReference type="Pfam" id="PF22632">
    <property type="entry name" value="BphC_D1"/>
    <property type="match status" value="1"/>
</dbReference>
<dbReference type="Pfam" id="PF00903">
    <property type="entry name" value="Glyoxalase"/>
    <property type="match status" value="1"/>
</dbReference>
<dbReference type="SUPFAM" id="SSF54593">
    <property type="entry name" value="Glyoxalase/Bleomycin resistance protein/Dihydroxybiphenyl dioxygenase"/>
    <property type="match status" value="2"/>
</dbReference>
<dbReference type="PROSITE" id="PS00082">
    <property type="entry name" value="EXTRADIOL_DIOXYGENAS"/>
    <property type="match status" value="1"/>
</dbReference>
<dbReference type="PROSITE" id="PS51819">
    <property type="entry name" value="VOC"/>
    <property type="match status" value="2"/>
</dbReference>